<evidence type="ECO:0000250" key="1"/>
<evidence type="ECO:0000305" key="2"/>
<name>MED16_XENLA</name>
<feature type="chain" id="PRO_0000307619" description="Mediator of RNA polymerase II transcription subunit 16">
    <location>
        <begin position="1"/>
        <end position="697"/>
    </location>
</feature>
<feature type="repeat" description="WD 1">
    <location>
        <begin position="68"/>
        <end position="107"/>
    </location>
</feature>
<feature type="repeat" description="WD 2">
    <location>
        <begin position="199"/>
        <end position="241"/>
    </location>
</feature>
<feature type="repeat" description="WD 3">
    <location>
        <begin position="264"/>
        <end position="308"/>
    </location>
</feature>
<feature type="repeat" description="WD 4">
    <location>
        <begin position="622"/>
        <end position="663"/>
    </location>
</feature>
<dbReference type="EMBL" id="BC093546">
    <property type="protein sequence ID" value="AAH93546.1"/>
    <property type="molecule type" value="mRNA"/>
</dbReference>
<dbReference type="RefSeq" id="NP_001090010.1">
    <property type="nucleotide sequence ID" value="NM_001096541.1"/>
</dbReference>
<dbReference type="SMR" id="Q566H4"/>
<dbReference type="DNASU" id="735082"/>
<dbReference type="GeneID" id="735082"/>
<dbReference type="KEGG" id="xla:735082"/>
<dbReference type="AGR" id="Xenbase:XB-GENE-967806"/>
<dbReference type="CTD" id="735082"/>
<dbReference type="Xenbase" id="XB-GENE-967806">
    <property type="gene designation" value="med16.L"/>
</dbReference>
<dbReference type="OrthoDB" id="10018574at2759"/>
<dbReference type="Proteomes" id="UP000186698">
    <property type="component" value="Chromosome 1L"/>
</dbReference>
<dbReference type="Bgee" id="735082">
    <property type="expression patterns" value="Expressed in testis and 19 other cell types or tissues"/>
</dbReference>
<dbReference type="GO" id="GO:0016592">
    <property type="term" value="C:mediator complex"/>
    <property type="evidence" value="ECO:0000318"/>
    <property type="project" value="GO_Central"/>
</dbReference>
<dbReference type="GO" id="GO:0045893">
    <property type="term" value="P:positive regulation of DNA-templated transcription"/>
    <property type="evidence" value="ECO:0000318"/>
    <property type="project" value="GO_Central"/>
</dbReference>
<dbReference type="FunFam" id="2.130.10.10:FF:000165">
    <property type="entry name" value="Mediator of RNA polymerase II transcription subunit 16"/>
    <property type="match status" value="1"/>
</dbReference>
<dbReference type="Gene3D" id="2.130.10.10">
    <property type="entry name" value="YVTN repeat-like/Quinoprotein amine dehydrogenase"/>
    <property type="match status" value="1"/>
</dbReference>
<dbReference type="InterPro" id="IPR048616">
    <property type="entry name" value="MED16_bridge"/>
</dbReference>
<dbReference type="InterPro" id="IPR048338">
    <property type="entry name" value="Mediator_Med16"/>
</dbReference>
<dbReference type="InterPro" id="IPR021665">
    <property type="entry name" value="Mediator_Med16_N"/>
</dbReference>
<dbReference type="InterPro" id="IPR015943">
    <property type="entry name" value="WD40/YVTN_repeat-like_dom_sf"/>
</dbReference>
<dbReference type="InterPro" id="IPR036322">
    <property type="entry name" value="WD40_repeat_dom_sf"/>
</dbReference>
<dbReference type="InterPro" id="IPR001680">
    <property type="entry name" value="WD40_rpt"/>
</dbReference>
<dbReference type="PANTHER" id="PTHR13224:SF6">
    <property type="entry name" value="MEDIATOR OF RNA POLYMERASE II TRANSCRIPTION SUBUNIT 16"/>
    <property type="match status" value="1"/>
</dbReference>
<dbReference type="PANTHER" id="PTHR13224">
    <property type="entry name" value="THYROID HORMONE RECEPTOR-ASSOCIATED PROTEIN-RELATED"/>
    <property type="match status" value="1"/>
</dbReference>
<dbReference type="Pfam" id="PF20718">
    <property type="entry name" value="Med16_bridge"/>
    <property type="match status" value="1"/>
</dbReference>
<dbReference type="Pfam" id="PF11635">
    <property type="entry name" value="Med16_N"/>
    <property type="match status" value="1"/>
</dbReference>
<dbReference type="Pfam" id="PF00400">
    <property type="entry name" value="WD40"/>
    <property type="match status" value="1"/>
</dbReference>
<dbReference type="SMART" id="SM00320">
    <property type="entry name" value="WD40"/>
    <property type="match status" value="1"/>
</dbReference>
<dbReference type="SUPFAM" id="SSF50978">
    <property type="entry name" value="WD40 repeat-like"/>
    <property type="match status" value="1"/>
</dbReference>
<dbReference type="PROSITE" id="PS50082">
    <property type="entry name" value="WD_REPEATS_2"/>
    <property type="match status" value="1"/>
</dbReference>
<dbReference type="PROSITE" id="PS50294">
    <property type="entry name" value="WD_REPEATS_REGION"/>
    <property type="match status" value="1"/>
</dbReference>
<keyword id="KW-0010">Activator</keyword>
<keyword id="KW-0539">Nucleus</keyword>
<keyword id="KW-1185">Reference proteome</keyword>
<keyword id="KW-0677">Repeat</keyword>
<keyword id="KW-0804">Transcription</keyword>
<keyword id="KW-0805">Transcription regulation</keyword>
<keyword id="KW-0853">WD repeat</keyword>
<protein>
    <recommendedName>
        <fullName>Mediator of RNA polymerase II transcription subunit 16</fullName>
    </recommendedName>
    <alternativeName>
        <fullName>Mediator complex subunit 16</fullName>
    </alternativeName>
</protein>
<reference key="1">
    <citation type="submission" date="2005-04" db="EMBL/GenBank/DDBJ databases">
        <authorList>
            <consortium name="NIH - Xenopus Gene Collection (XGC) project"/>
        </authorList>
    </citation>
    <scope>NUCLEOTIDE SEQUENCE [LARGE SCALE MRNA]</scope>
    <source>
        <tissue>Embryo</tissue>
    </source>
</reference>
<gene>
    <name type="primary">med16</name>
</gene>
<accession>Q566H4</accession>
<sequence>MDVAYICEWDRRPRTSHCPSIPLVCAWSCRNLIAFTTDQRNEEEKDITNLIHILDTEHPWDVYSINSGHQEVITCLEWDQSGSRLLSADADGRIKCWGMTDHLANSWQNLVGSEVDGDPIVALSWLHNGVKLALHVEKSGVSSFGEKFSRVKFSPSLTLFGGKPMEGWIAVTVSGLVTVSLLKPNGQVLTATESLCRLRCRVALADIAFTGGGNIVVATCDGSSTSPVQFYKVCVSVVSEKCKIDTEILPSLFMRCTTDPARKDKFPAVTHLKFLARDMSEQVLLCASNQCSSIAECWSLRKEGLPLNNIFQQLSPAVSDKQPMILKWRILSATNELERVSAVALPKLPISLTNTDIKVASETKFYPGLGLALAFHDGNVQIVHRLSLQPMAVLYGSSLRPSEEPSLKRQRSPTPCIHFKALQMSWTSLALVGLDTQGKLSILRVSPSMGHSLDMSTSLRHLLFLLEYCMVTGYDWWDILLHVQPGMVHNLVEKLNEEYTRQNAALQQVLSTRILAMKASLCKLSQTTVTRVCDYHAKLFLISISCTLKSLLRPHVLNTPDKSPGDRLTEICNKFTDTDIDKVMINLKTEEFVLDMPTLQSLQQLIQWLGDFVLYLLVSLPNQGSSVRPGHSFLRDGASLGTLREMMVMIRIWGLLKPSCLPVYTATSDTQDSMSLLFRLLTRLWLCCPPHNQRLIT</sequence>
<comment type="function">
    <text evidence="1">Component of the Mediator complex, a coactivator involved in the regulated transcription of nearly all RNA polymerase II-dependent genes. Mediator functions as a bridge to convey information from gene-specific regulatory proteins to the basal RNA polymerase II transcription machinery. Mediator is recruited to promoters by direct interactions with regulatory proteins and serves as a scaffold for the assembly of a functional preinitiation complex with RNA polymerase II and the general transcription factors (By similarity).</text>
</comment>
<comment type="subunit">
    <text evidence="1">Component of the Mediator complex.</text>
</comment>
<comment type="subcellular location">
    <subcellularLocation>
        <location evidence="2">Nucleus</location>
    </subcellularLocation>
</comment>
<comment type="similarity">
    <text evidence="2">Belongs to the Mediator complex subunit 16 family.</text>
</comment>
<organism>
    <name type="scientific">Xenopus laevis</name>
    <name type="common">African clawed frog</name>
    <dbReference type="NCBI Taxonomy" id="8355"/>
    <lineage>
        <taxon>Eukaryota</taxon>
        <taxon>Metazoa</taxon>
        <taxon>Chordata</taxon>
        <taxon>Craniata</taxon>
        <taxon>Vertebrata</taxon>
        <taxon>Euteleostomi</taxon>
        <taxon>Amphibia</taxon>
        <taxon>Batrachia</taxon>
        <taxon>Anura</taxon>
        <taxon>Pipoidea</taxon>
        <taxon>Pipidae</taxon>
        <taxon>Xenopodinae</taxon>
        <taxon>Xenopus</taxon>
        <taxon>Xenopus</taxon>
    </lineage>
</organism>
<proteinExistence type="evidence at transcript level"/>